<feature type="chain" id="PRO_0000060704" description="Cytochrome b">
    <location>
        <begin position="1"/>
        <end position="381"/>
    </location>
</feature>
<feature type="transmembrane region" description="Helical" evidence="2">
    <location>
        <begin position="33"/>
        <end position="53"/>
    </location>
</feature>
<feature type="transmembrane region" description="Helical" evidence="2">
    <location>
        <begin position="77"/>
        <end position="98"/>
    </location>
</feature>
<feature type="transmembrane region" description="Helical" evidence="2">
    <location>
        <begin position="113"/>
        <end position="133"/>
    </location>
</feature>
<feature type="transmembrane region" description="Helical" evidence="2">
    <location>
        <begin position="178"/>
        <end position="198"/>
    </location>
</feature>
<feature type="transmembrane region" description="Helical" evidence="2">
    <location>
        <begin position="226"/>
        <end position="246"/>
    </location>
</feature>
<feature type="transmembrane region" description="Helical" evidence="2">
    <location>
        <begin position="288"/>
        <end position="308"/>
    </location>
</feature>
<feature type="transmembrane region" description="Helical" evidence="2">
    <location>
        <begin position="320"/>
        <end position="340"/>
    </location>
</feature>
<feature type="transmembrane region" description="Helical" evidence="2">
    <location>
        <begin position="347"/>
        <end position="367"/>
    </location>
</feature>
<feature type="binding site" description="axial binding residue" evidence="2">
    <location>
        <position position="83"/>
    </location>
    <ligand>
        <name>heme b</name>
        <dbReference type="ChEBI" id="CHEBI:60344"/>
        <label>b562</label>
    </ligand>
    <ligandPart>
        <name>Fe</name>
        <dbReference type="ChEBI" id="CHEBI:18248"/>
    </ligandPart>
</feature>
<feature type="binding site" description="axial binding residue" evidence="2">
    <location>
        <position position="97"/>
    </location>
    <ligand>
        <name>heme b</name>
        <dbReference type="ChEBI" id="CHEBI:60344"/>
        <label>b566</label>
    </ligand>
    <ligandPart>
        <name>Fe</name>
        <dbReference type="ChEBI" id="CHEBI:18248"/>
    </ligandPart>
</feature>
<feature type="binding site" description="axial binding residue" evidence="2">
    <location>
        <position position="182"/>
    </location>
    <ligand>
        <name>heme b</name>
        <dbReference type="ChEBI" id="CHEBI:60344"/>
        <label>b562</label>
    </ligand>
    <ligandPart>
        <name>Fe</name>
        <dbReference type="ChEBI" id="CHEBI:18248"/>
    </ligandPart>
</feature>
<feature type="binding site" description="axial binding residue" evidence="2">
    <location>
        <position position="196"/>
    </location>
    <ligand>
        <name>heme b</name>
        <dbReference type="ChEBI" id="CHEBI:60344"/>
        <label>b566</label>
    </ligand>
    <ligandPart>
        <name>Fe</name>
        <dbReference type="ChEBI" id="CHEBI:18248"/>
    </ligandPart>
</feature>
<feature type="binding site" evidence="2">
    <location>
        <position position="201"/>
    </location>
    <ligand>
        <name>a ubiquinone</name>
        <dbReference type="ChEBI" id="CHEBI:16389"/>
    </ligand>
</feature>
<name>CYB_CAEFU</name>
<comment type="function">
    <text evidence="2">Component of the ubiquinol-cytochrome c reductase complex (complex III or cytochrome b-c1 complex) that is part of the mitochondrial respiratory chain. The b-c1 complex mediates electron transfer from ubiquinol to cytochrome c. Contributes to the generation of a proton gradient across the mitochondrial membrane that is then used for ATP synthesis.</text>
</comment>
<comment type="cofactor">
    <cofactor evidence="2">
        <name>heme b</name>
        <dbReference type="ChEBI" id="CHEBI:60344"/>
    </cofactor>
    <text evidence="2">Binds 2 heme b groups non-covalently.</text>
</comment>
<comment type="subunit">
    <text evidence="2">The cytochrome bc1 complex contains 11 subunits: 3 respiratory subunits (MT-CYB, CYC1 and UQCRFS1), 2 core proteins (UQCRC1 and UQCRC2) and 6 low-molecular weight proteins (UQCRH/QCR6, UQCRB/QCR7, UQCRQ/QCR8, UQCR10/QCR9, UQCR11/QCR10 and a cleavage product of UQCRFS1). This cytochrome bc1 complex then forms a dimer.</text>
</comment>
<comment type="subcellular location">
    <subcellularLocation>
        <location evidence="2">Mitochondrion inner membrane</location>
        <topology evidence="2">Multi-pass membrane protein</topology>
    </subcellularLocation>
</comment>
<comment type="miscellaneous">
    <text evidence="1">Heme 1 (or BL or b562) is low-potential and absorbs at about 562 nm, and heme 2 (or BH or b566) is high-potential and absorbs at about 566 nm.</text>
</comment>
<comment type="similarity">
    <text evidence="3 4">Belongs to the cytochrome b family.</text>
</comment>
<comment type="caution">
    <text evidence="2">The full-length protein contains only eight transmembrane helices, not nine as predicted by bioinformatics tools.</text>
</comment>
<geneLocation type="mitochondrion"/>
<evidence type="ECO:0000250" key="1"/>
<evidence type="ECO:0000250" key="2">
    <source>
        <dbReference type="UniProtKB" id="P00157"/>
    </source>
</evidence>
<evidence type="ECO:0000255" key="3">
    <source>
        <dbReference type="PROSITE-ProRule" id="PRU00967"/>
    </source>
</evidence>
<evidence type="ECO:0000255" key="4">
    <source>
        <dbReference type="PROSITE-ProRule" id="PRU00968"/>
    </source>
</evidence>
<dbReference type="EMBL" id="AF102816">
    <property type="protein sequence ID" value="AAD16873.1"/>
    <property type="molecule type" value="Genomic_DNA"/>
</dbReference>
<dbReference type="SMR" id="Q9ZY46"/>
<dbReference type="GO" id="GO:0005743">
    <property type="term" value="C:mitochondrial inner membrane"/>
    <property type="evidence" value="ECO:0007669"/>
    <property type="project" value="UniProtKB-SubCell"/>
</dbReference>
<dbReference type="GO" id="GO:0045275">
    <property type="term" value="C:respiratory chain complex III"/>
    <property type="evidence" value="ECO:0007669"/>
    <property type="project" value="InterPro"/>
</dbReference>
<dbReference type="GO" id="GO:0046872">
    <property type="term" value="F:metal ion binding"/>
    <property type="evidence" value="ECO:0007669"/>
    <property type="project" value="UniProtKB-KW"/>
</dbReference>
<dbReference type="GO" id="GO:0008121">
    <property type="term" value="F:ubiquinol-cytochrome-c reductase activity"/>
    <property type="evidence" value="ECO:0007669"/>
    <property type="project" value="InterPro"/>
</dbReference>
<dbReference type="GO" id="GO:0006122">
    <property type="term" value="P:mitochondrial electron transport, ubiquinol to cytochrome c"/>
    <property type="evidence" value="ECO:0007669"/>
    <property type="project" value="TreeGrafter"/>
</dbReference>
<dbReference type="CDD" id="cd00290">
    <property type="entry name" value="cytochrome_b_C"/>
    <property type="match status" value="1"/>
</dbReference>
<dbReference type="CDD" id="cd00284">
    <property type="entry name" value="Cytochrome_b_N"/>
    <property type="match status" value="1"/>
</dbReference>
<dbReference type="FunFam" id="1.20.810.10:FF:000002">
    <property type="entry name" value="Cytochrome b"/>
    <property type="match status" value="1"/>
</dbReference>
<dbReference type="Gene3D" id="1.20.810.10">
    <property type="entry name" value="Cytochrome Bc1 Complex, Chain C"/>
    <property type="match status" value="1"/>
</dbReference>
<dbReference type="InterPro" id="IPR005798">
    <property type="entry name" value="Cyt_b/b6_C"/>
</dbReference>
<dbReference type="InterPro" id="IPR036150">
    <property type="entry name" value="Cyt_b/b6_C_sf"/>
</dbReference>
<dbReference type="InterPro" id="IPR005797">
    <property type="entry name" value="Cyt_b/b6_N"/>
</dbReference>
<dbReference type="InterPro" id="IPR027387">
    <property type="entry name" value="Cytb/b6-like_sf"/>
</dbReference>
<dbReference type="InterPro" id="IPR030689">
    <property type="entry name" value="Cytochrome_b"/>
</dbReference>
<dbReference type="InterPro" id="IPR048260">
    <property type="entry name" value="Cytochrome_b_C_euk/bac"/>
</dbReference>
<dbReference type="InterPro" id="IPR048259">
    <property type="entry name" value="Cytochrome_b_N_euk/bac"/>
</dbReference>
<dbReference type="InterPro" id="IPR016174">
    <property type="entry name" value="Di-haem_cyt_TM"/>
</dbReference>
<dbReference type="PANTHER" id="PTHR19271">
    <property type="entry name" value="CYTOCHROME B"/>
    <property type="match status" value="1"/>
</dbReference>
<dbReference type="PANTHER" id="PTHR19271:SF16">
    <property type="entry name" value="CYTOCHROME B"/>
    <property type="match status" value="1"/>
</dbReference>
<dbReference type="Pfam" id="PF00032">
    <property type="entry name" value="Cytochrom_B_C"/>
    <property type="match status" value="1"/>
</dbReference>
<dbReference type="Pfam" id="PF00033">
    <property type="entry name" value="Cytochrome_B"/>
    <property type="match status" value="1"/>
</dbReference>
<dbReference type="PIRSF" id="PIRSF038885">
    <property type="entry name" value="COB"/>
    <property type="match status" value="1"/>
</dbReference>
<dbReference type="SUPFAM" id="SSF81648">
    <property type="entry name" value="a domain/subunit of cytochrome bc1 complex (Ubiquinol-cytochrome c reductase)"/>
    <property type="match status" value="1"/>
</dbReference>
<dbReference type="SUPFAM" id="SSF81342">
    <property type="entry name" value="Transmembrane di-heme cytochromes"/>
    <property type="match status" value="1"/>
</dbReference>
<dbReference type="PROSITE" id="PS51003">
    <property type="entry name" value="CYTB_CTER"/>
    <property type="match status" value="1"/>
</dbReference>
<dbReference type="PROSITE" id="PS51002">
    <property type="entry name" value="CYTB_NTER"/>
    <property type="match status" value="1"/>
</dbReference>
<proteinExistence type="inferred from homology"/>
<accession>Q9ZY46</accession>
<reference key="1">
    <citation type="journal article" date="1998" name="Proc. R. Soc. B">
        <title>The origin of the Australasian marsupial fauna and the phylogenetic affinities of the enigmatic monito del monte and marsupial mole.</title>
        <authorList>
            <person name="Springer M.S."/>
            <person name="Westerman M."/>
            <person name="Kavanagh J.R."/>
            <person name="Burk A."/>
            <person name="Woodburne M.O."/>
            <person name="Kao D.J."/>
            <person name="Krajewski C."/>
        </authorList>
    </citation>
    <scope>NUCLEOTIDE SEQUENCE [GENOMIC DNA]</scope>
</reference>
<organism>
    <name type="scientific">Caenolestes fuliginosus</name>
    <name type="common">Shrew opossum</name>
    <dbReference type="NCBI Taxonomy" id="37696"/>
    <lineage>
        <taxon>Eukaryota</taxon>
        <taxon>Metazoa</taxon>
        <taxon>Chordata</taxon>
        <taxon>Craniata</taxon>
        <taxon>Vertebrata</taxon>
        <taxon>Euteleostomi</taxon>
        <taxon>Mammalia</taxon>
        <taxon>Metatheria</taxon>
        <taxon>Paucituberculata</taxon>
        <taxon>Caenolestidae</taxon>
        <taxon>Caenolestes</taxon>
    </lineage>
</organism>
<sequence>MTNSRETHLLMKIINHSFIELPTPSNISAWWNFGSLLGACLMIQILTGLFLAMHYISDTMTAFSSVAHICRDVNYGWLIRNMHANGASMFFMCLYLHIGRGIYYGSYLYKETWNIGVVLLFAVMATAFVGYVLPWGQMSFWGATVITNLLSAIPYIGTSLVEWIWGGFSVDKATLTRFFAFHFILPFIILALVIVHLLFLHETGSNNPSGINPDSDKIPFHPYYTIKDILGLFMMAFTLVMLALFSPDMLGDPDNFSPANPLNTPPHIKPEWYFLFAYAILRSIPNKLGGVLALLASILILLIIPLLHTSTQRSLMFRPISQSLFWILTANLFILTWIGGQPVEQPYIIIGQTASILYFMIIILLMPLAGMIENHMLKPKW</sequence>
<protein>
    <recommendedName>
        <fullName>Cytochrome b</fullName>
    </recommendedName>
    <alternativeName>
        <fullName>Complex III subunit 3</fullName>
    </alternativeName>
    <alternativeName>
        <fullName>Complex III subunit III</fullName>
    </alternativeName>
    <alternativeName>
        <fullName>Cytochrome b-c1 complex subunit 3</fullName>
    </alternativeName>
    <alternativeName>
        <fullName>Ubiquinol-cytochrome-c reductase complex cytochrome b subunit</fullName>
    </alternativeName>
</protein>
<gene>
    <name type="primary">MT-CYB</name>
    <name type="synonym">COB</name>
    <name type="synonym">CYTB</name>
    <name type="synonym">MTCYB</name>
</gene>
<keyword id="KW-0249">Electron transport</keyword>
<keyword id="KW-0349">Heme</keyword>
<keyword id="KW-0408">Iron</keyword>
<keyword id="KW-0472">Membrane</keyword>
<keyword id="KW-0479">Metal-binding</keyword>
<keyword id="KW-0496">Mitochondrion</keyword>
<keyword id="KW-0999">Mitochondrion inner membrane</keyword>
<keyword id="KW-0679">Respiratory chain</keyword>
<keyword id="KW-0812">Transmembrane</keyword>
<keyword id="KW-1133">Transmembrane helix</keyword>
<keyword id="KW-0813">Transport</keyword>
<keyword id="KW-0830">Ubiquinone</keyword>